<proteinExistence type="inferred from homology"/>
<reference key="1">
    <citation type="submission" date="2009-07" db="EMBL/GenBank/DDBJ databases">
        <title>Complete sequence of Pectobacterium carotovorum subsp. carotovorum PC1.</title>
        <authorList>
            <consortium name="US DOE Joint Genome Institute"/>
            <person name="Lucas S."/>
            <person name="Copeland A."/>
            <person name="Lapidus A."/>
            <person name="Glavina del Rio T."/>
            <person name="Tice H."/>
            <person name="Bruce D."/>
            <person name="Goodwin L."/>
            <person name="Pitluck S."/>
            <person name="Munk A.C."/>
            <person name="Brettin T."/>
            <person name="Detter J.C."/>
            <person name="Han C."/>
            <person name="Tapia R."/>
            <person name="Larimer F."/>
            <person name="Land M."/>
            <person name="Hauser L."/>
            <person name="Kyrpides N."/>
            <person name="Mikhailova N."/>
            <person name="Balakrishnan V."/>
            <person name="Glasner J."/>
            <person name="Perna N.T."/>
        </authorList>
    </citation>
    <scope>NUCLEOTIDE SEQUENCE [LARGE SCALE GENOMIC DNA]</scope>
    <source>
        <strain>PC1</strain>
    </source>
</reference>
<feature type="chain" id="PRO_1000212704" description="Replication restart protein PriB">
    <location>
        <begin position="1"/>
        <end position="106"/>
    </location>
</feature>
<feature type="domain" description="SSB" evidence="1">
    <location>
        <begin position="4"/>
        <end position="103"/>
    </location>
</feature>
<sequence>MVTVNRLVLSGTVCKTPIRKVSPSGIPHCQFVLEHRSTQEEAGLSRQAWCRMPVIVSGLSSQAVTHSITVGTQLTVHGFISCHQGRNGLSKIVLHAEQIELIDSGD</sequence>
<gene>
    <name evidence="1" type="primary">priB</name>
    <name type="ordered locus">PC1_3434</name>
</gene>
<organism>
    <name type="scientific">Pectobacterium carotovorum subsp. carotovorum (strain PC1)</name>
    <dbReference type="NCBI Taxonomy" id="561230"/>
    <lineage>
        <taxon>Bacteria</taxon>
        <taxon>Pseudomonadati</taxon>
        <taxon>Pseudomonadota</taxon>
        <taxon>Gammaproteobacteria</taxon>
        <taxon>Enterobacterales</taxon>
        <taxon>Pectobacteriaceae</taxon>
        <taxon>Pectobacterium</taxon>
    </lineage>
</organism>
<accession>C6DE14</accession>
<protein>
    <recommendedName>
        <fullName evidence="1">Replication restart protein PriB</fullName>
    </recommendedName>
</protein>
<name>PRIB_PECCP</name>
<dbReference type="EMBL" id="CP001657">
    <property type="protein sequence ID" value="ACT14450.1"/>
    <property type="molecule type" value="Genomic_DNA"/>
</dbReference>
<dbReference type="SMR" id="C6DE14"/>
<dbReference type="STRING" id="561230.PC1_3434"/>
<dbReference type="KEGG" id="pct:PC1_3434"/>
<dbReference type="eggNOG" id="COG2965">
    <property type="taxonomic scope" value="Bacteria"/>
</dbReference>
<dbReference type="HOGENOM" id="CLU_166075_0_0_6"/>
<dbReference type="OrthoDB" id="9180733at2"/>
<dbReference type="Proteomes" id="UP000002736">
    <property type="component" value="Chromosome"/>
</dbReference>
<dbReference type="GO" id="GO:1990077">
    <property type="term" value="C:primosome complex"/>
    <property type="evidence" value="ECO:0007669"/>
    <property type="project" value="UniProtKB-KW"/>
</dbReference>
<dbReference type="GO" id="GO:0003697">
    <property type="term" value="F:single-stranded DNA binding"/>
    <property type="evidence" value="ECO:0007669"/>
    <property type="project" value="UniProtKB-UniRule"/>
</dbReference>
<dbReference type="GO" id="GO:0006269">
    <property type="term" value="P:DNA replication, synthesis of primer"/>
    <property type="evidence" value="ECO:0007669"/>
    <property type="project" value="UniProtKB-KW"/>
</dbReference>
<dbReference type="Gene3D" id="2.40.50.140">
    <property type="entry name" value="Nucleic acid-binding proteins"/>
    <property type="match status" value="1"/>
</dbReference>
<dbReference type="HAMAP" id="MF_00720">
    <property type="entry name" value="PriB"/>
    <property type="match status" value="1"/>
</dbReference>
<dbReference type="InterPro" id="IPR012340">
    <property type="entry name" value="NA-bd_OB-fold"/>
</dbReference>
<dbReference type="InterPro" id="IPR000424">
    <property type="entry name" value="Primosome_PriB/ssb"/>
</dbReference>
<dbReference type="InterPro" id="IPR023646">
    <property type="entry name" value="Prisomal_replication_PriB"/>
</dbReference>
<dbReference type="NCBIfam" id="TIGR04418">
    <property type="entry name" value="PriB_gamma"/>
    <property type="match status" value="1"/>
</dbReference>
<dbReference type="Pfam" id="PF22657">
    <property type="entry name" value="SSB_1"/>
    <property type="match status" value="1"/>
</dbReference>
<dbReference type="PIRSF" id="PIRSF003135">
    <property type="entry name" value="Primosomal_n"/>
    <property type="match status" value="1"/>
</dbReference>
<dbReference type="SUPFAM" id="SSF50249">
    <property type="entry name" value="Nucleic acid-binding proteins"/>
    <property type="match status" value="1"/>
</dbReference>
<dbReference type="PROSITE" id="PS50935">
    <property type="entry name" value="SSB"/>
    <property type="match status" value="1"/>
</dbReference>
<evidence type="ECO:0000255" key="1">
    <source>
        <dbReference type="HAMAP-Rule" id="MF_00720"/>
    </source>
</evidence>
<keyword id="KW-0235">DNA replication</keyword>
<keyword id="KW-0238">DNA-binding</keyword>
<keyword id="KW-0639">Primosome</keyword>
<comment type="function">
    <text evidence="1">Involved in the restart of stalled replication forks, which reloads the replicative helicase on sites other than the origin of replication; the PriA-PriB pathway is the major replication restart pathway. During primosome assembly it facilitates complex formation between PriA and DnaT on DNA; stabilizes PriA on DNA. Stimulates the DNA unwinding activity of PriA helicase.</text>
</comment>
<comment type="subunit">
    <text evidence="1">Homodimer. Interacts with PriA and DnaT. Component of the replication restart primosome. Primosome assembly occurs via a 'hand-off' mechanism. PriA binds to replication forks, subsequently PriB then DnaT bind; DnaT then displaces ssDNA to generate the helicase loading substrate.</text>
</comment>
<comment type="similarity">
    <text evidence="1">Belongs to the PriB family.</text>
</comment>